<dbReference type="EMBL" id="AJ245867">
    <property type="protein sequence ID" value="CAB53034.1"/>
    <property type="molecule type" value="mRNA"/>
</dbReference>
<dbReference type="EMBL" id="AL049640">
    <property type="protein sequence ID" value="CAB40997.1"/>
    <property type="molecule type" value="Genomic_DNA"/>
</dbReference>
<dbReference type="EMBL" id="AL161534">
    <property type="protein sequence ID" value="CAB78322.1"/>
    <property type="molecule type" value="Genomic_DNA"/>
</dbReference>
<dbReference type="EMBL" id="CP002687">
    <property type="protein sequence ID" value="AEE83186.1"/>
    <property type="molecule type" value="Genomic_DNA"/>
</dbReference>
<dbReference type="EMBL" id="AF428447">
    <property type="protein sequence ID" value="AAL16216.1"/>
    <property type="molecule type" value="mRNA"/>
</dbReference>
<dbReference type="EMBL" id="AF446350">
    <property type="protein sequence ID" value="AAL48225.1"/>
    <property type="molecule type" value="mRNA"/>
</dbReference>
<dbReference type="EMBL" id="AY059949">
    <property type="protein sequence ID" value="AAL24431.1"/>
    <property type="molecule type" value="mRNA"/>
</dbReference>
<dbReference type="EMBL" id="AY097427">
    <property type="protein sequence ID" value="AAM19943.1"/>
    <property type="molecule type" value="mRNA"/>
</dbReference>
<dbReference type="EMBL" id="AY087339">
    <property type="protein sequence ID" value="AAM64889.1"/>
    <property type="molecule type" value="mRNA"/>
</dbReference>
<dbReference type="EMBL" id="AB015861">
    <property type="protein sequence ID" value="BAA84771.1"/>
    <property type="molecule type" value="mRNA"/>
</dbReference>
<dbReference type="PIR" id="T06638">
    <property type="entry name" value="T06638"/>
</dbReference>
<dbReference type="RefSeq" id="NP_193016.1">
    <property type="nucleotide sequence ID" value="NM_117349.3"/>
</dbReference>
<dbReference type="PDB" id="7WFD">
    <property type="method" value="EM"/>
    <property type="resolution" value="3.25 A"/>
    <property type="chains" value="AL=1-219"/>
</dbReference>
<dbReference type="PDB" id="7WFE">
    <property type="method" value="EM"/>
    <property type="resolution" value="3.25 A"/>
    <property type="chains" value="BL=1-219"/>
</dbReference>
<dbReference type="PDB" id="7WG5">
    <property type="method" value="EM"/>
    <property type="resolution" value="3.89 A"/>
    <property type="chains" value="AL/BL=1-219"/>
</dbReference>
<dbReference type="PDB" id="8J6Z">
    <property type="method" value="EM"/>
    <property type="resolution" value="2.79 A"/>
    <property type="chains" value="L=1-219"/>
</dbReference>
<dbReference type="PDB" id="8J7A">
    <property type="method" value="EM"/>
    <property type="resolution" value="3.06 A"/>
    <property type="chains" value="L=1-219"/>
</dbReference>
<dbReference type="PDB" id="8J7B">
    <property type="method" value="EM"/>
    <property type="resolution" value="3.22 A"/>
    <property type="chains" value="L=1-219"/>
</dbReference>
<dbReference type="PDBsum" id="7WFD"/>
<dbReference type="PDBsum" id="7WFE"/>
<dbReference type="PDBsum" id="7WG5"/>
<dbReference type="PDBsum" id="8J6Z"/>
<dbReference type="PDBsum" id="8J7A"/>
<dbReference type="PDBsum" id="8J7B"/>
<dbReference type="EMDB" id="EMD-32462"/>
<dbReference type="EMDB" id="EMD-32463"/>
<dbReference type="EMDB" id="EMD-32477"/>
<dbReference type="EMDB" id="EMD-36021"/>
<dbReference type="EMDB" id="EMD-36036"/>
<dbReference type="EMDB" id="EMD-36037"/>
<dbReference type="SMR" id="Q9SUI4"/>
<dbReference type="BioGRID" id="12189">
    <property type="interactions" value="19"/>
</dbReference>
<dbReference type="FunCoup" id="Q9SUI4">
    <property type="interactions" value="788"/>
</dbReference>
<dbReference type="IntAct" id="Q9SUI4">
    <property type="interactions" value="1"/>
</dbReference>
<dbReference type="STRING" id="3702.Q9SUI4"/>
<dbReference type="TCDB" id="5.B.4.1.1">
    <property type="family name" value="the plant photosystem i supercomplex (psi) family"/>
</dbReference>
<dbReference type="iPTMnet" id="Q9SUI4"/>
<dbReference type="PaxDb" id="3702-AT4G12800.1"/>
<dbReference type="ProteomicsDB" id="226325"/>
<dbReference type="EnsemblPlants" id="AT4G12800.1">
    <property type="protein sequence ID" value="AT4G12800.1"/>
    <property type="gene ID" value="AT4G12800"/>
</dbReference>
<dbReference type="GeneID" id="826892"/>
<dbReference type="Gramene" id="AT4G12800.1">
    <property type="protein sequence ID" value="AT4G12800.1"/>
    <property type="gene ID" value="AT4G12800"/>
</dbReference>
<dbReference type="KEGG" id="ath:AT4G12800"/>
<dbReference type="Araport" id="AT4G12800"/>
<dbReference type="TAIR" id="AT4G12800">
    <property type="gene designation" value="PSAL"/>
</dbReference>
<dbReference type="eggNOG" id="ENOG502QVFH">
    <property type="taxonomic scope" value="Eukaryota"/>
</dbReference>
<dbReference type="HOGENOM" id="CLU_092204_0_0_1"/>
<dbReference type="InParanoid" id="Q9SUI4"/>
<dbReference type="OrthoDB" id="35506at2759"/>
<dbReference type="PhylomeDB" id="Q9SUI4"/>
<dbReference type="BioCyc" id="MetaCyc:MONOMER-1094"/>
<dbReference type="CD-CODE" id="4299E36E">
    <property type="entry name" value="Nucleolus"/>
</dbReference>
<dbReference type="PRO" id="PR:Q9SUI4"/>
<dbReference type="Proteomes" id="UP000006548">
    <property type="component" value="Chromosome 4"/>
</dbReference>
<dbReference type="ExpressionAtlas" id="Q9SUI4">
    <property type="expression patterns" value="baseline and differential"/>
</dbReference>
<dbReference type="GO" id="GO:0009507">
    <property type="term" value="C:chloroplast"/>
    <property type="evidence" value="ECO:0007005"/>
    <property type="project" value="TAIR"/>
</dbReference>
<dbReference type="GO" id="GO:0009941">
    <property type="term" value="C:chloroplast envelope"/>
    <property type="evidence" value="ECO:0007005"/>
    <property type="project" value="TAIR"/>
</dbReference>
<dbReference type="GO" id="GO:0031969">
    <property type="term" value="C:chloroplast membrane"/>
    <property type="evidence" value="ECO:0007669"/>
    <property type="project" value="UniProtKB-SubCell"/>
</dbReference>
<dbReference type="GO" id="GO:0009534">
    <property type="term" value="C:chloroplast thylakoid"/>
    <property type="evidence" value="ECO:0007005"/>
    <property type="project" value="TAIR"/>
</dbReference>
<dbReference type="GO" id="GO:0009535">
    <property type="term" value="C:chloroplast thylakoid membrane"/>
    <property type="evidence" value="ECO:0007005"/>
    <property type="project" value="TAIR"/>
</dbReference>
<dbReference type="GO" id="GO:0005829">
    <property type="term" value="C:cytosol"/>
    <property type="evidence" value="ECO:0007005"/>
    <property type="project" value="TAIR"/>
</dbReference>
<dbReference type="GO" id="GO:0009538">
    <property type="term" value="C:photosystem I reaction center"/>
    <property type="evidence" value="ECO:0007669"/>
    <property type="project" value="InterPro"/>
</dbReference>
<dbReference type="GO" id="GO:0010287">
    <property type="term" value="C:plastoglobule"/>
    <property type="evidence" value="ECO:0007005"/>
    <property type="project" value="TAIR"/>
</dbReference>
<dbReference type="GO" id="GO:0009579">
    <property type="term" value="C:thylakoid"/>
    <property type="evidence" value="ECO:0007005"/>
    <property type="project" value="TAIR"/>
</dbReference>
<dbReference type="GO" id="GO:0003729">
    <property type="term" value="F:mRNA binding"/>
    <property type="evidence" value="ECO:0000314"/>
    <property type="project" value="TAIR"/>
</dbReference>
<dbReference type="GO" id="GO:0019904">
    <property type="term" value="F:protein domain specific binding"/>
    <property type="evidence" value="ECO:0000353"/>
    <property type="project" value="CAFA"/>
</dbReference>
<dbReference type="GO" id="GO:0015979">
    <property type="term" value="P:photosynthesis"/>
    <property type="evidence" value="ECO:0007669"/>
    <property type="project" value="UniProtKB-KW"/>
</dbReference>
<dbReference type="FunFam" id="1.20.1240.10:FF:000001">
    <property type="entry name" value="Photosystem I reaction center subunit XI"/>
    <property type="match status" value="1"/>
</dbReference>
<dbReference type="Gene3D" id="1.20.1240.10">
    <property type="entry name" value="Photosystem I PsaL, reaction centre subunit XI"/>
    <property type="match status" value="1"/>
</dbReference>
<dbReference type="InterPro" id="IPR003757">
    <property type="entry name" value="PSI_PsaL"/>
</dbReference>
<dbReference type="InterPro" id="IPR036592">
    <property type="entry name" value="PSI_PsaL_sf"/>
</dbReference>
<dbReference type="InterPro" id="IPR022980">
    <property type="entry name" value="PSI_suXI"/>
</dbReference>
<dbReference type="PANTHER" id="PTHR34803">
    <property type="entry name" value="PHOTOSYSTEM I REACTION CENTER SUBUNIT XI, CHLOROPLASTIC"/>
    <property type="match status" value="1"/>
</dbReference>
<dbReference type="PANTHER" id="PTHR34803:SF2">
    <property type="entry name" value="PHOTOSYSTEM I REACTION CENTER SUBUNIT XI, CHLOROPLASTIC"/>
    <property type="match status" value="1"/>
</dbReference>
<dbReference type="Pfam" id="PF02605">
    <property type="entry name" value="PsaL"/>
    <property type="match status" value="1"/>
</dbReference>
<dbReference type="SUPFAM" id="SSF81568">
    <property type="entry name" value="Photosystem I reaction center subunit XI, PsaL"/>
    <property type="match status" value="1"/>
</dbReference>
<sequence>MAASASPMASQLRSSFSSASLSQRLAVPKGISGAPFGVSPTKRVSSFTVRAVKSDKTTFQVVQPINGDPFIGSLETPVTSSPLIAWYLSNLPGYRTAVNPLLRGVEVGLAHGFFLVGPFVKAGPLRNTAYAGSAGSLAAAGLVVILSMCLTIYGISSFKEGEPSIAPSLTLTGRKKQPDQLQTADGWAKFTGGFFFGGISGVTWAYFLLYVLDLPYFVK</sequence>
<reference key="1">
    <citation type="submission" date="1999-08" db="EMBL/GenBank/DDBJ databases">
        <title>Sequences and map position of 31 Arabidopsis thaliana cDNAs encoding organellar polypeptides.</title>
        <authorList>
            <person name="Legen J."/>
            <person name="Misera S."/>
            <person name="Herrmann R.G."/>
            <person name="Altschmied L."/>
        </authorList>
    </citation>
    <scope>NUCLEOTIDE SEQUENCE [MRNA]</scope>
    <source>
        <strain>cv. Columbia</strain>
    </source>
</reference>
<reference key="2">
    <citation type="journal article" date="1999" name="Nature">
        <title>Sequence and analysis of chromosome 4 of the plant Arabidopsis thaliana.</title>
        <authorList>
            <person name="Mayer K.F.X."/>
            <person name="Schueller C."/>
            <person name="Wambutt R."/>
            <person name="Murphy G."/>
            <person name="Volckaert G."/>
            <person name="Pohl T."/>
            <person name="Duesterhoeft A."/>
            <person name="Stiekema W."/>
            <person name="Entian K.-D."/>
            <person name="Terryn N."/>
            <person name="Harris B."/>
            <person name="Ansorge W."/>
            <person name="Brandt P."/>
            <person name="Grivell L.A."/>
            <person name="Rieger M."/>
            <person name="Weichselgartner M."/>
            <person name="de Simone V."/>
            <person name="Obermaier B."/>
            <person name="Mache R."/>
            <person name="Mueller M."/>
            <person name="Kreis M."/>
            <person name="Delseny M."/>
            <person name="Puigdomenech P."/>
            <person name="Watson M."/>
            <person name="Schmidtheini T."/>
            <person name="Reichert B."/>
            <person name="Portetelle D."/>
            <person name="Perez-Alonso M."/>
            <person name="Boutry M."/>
            <person name="Bancroft I."/>
            <person name="Vos P."/>
            <person name="Hoheisel J."/>
            <person name="Zimmermann W."/>
            <person name="Wedler H."/>
            <person name="Ridley P."/>
            <person name="Langham S.-A."/>
            <person name="McCullagh B."/>
            <person name="Bilham L."/>
            <person name="Robben J."/>
            <person name="van der Schueren J."/>
            <person name="Grymonprez B."/>
            <person name="Chuang Y.-J."/>
            <person name="Vandenbussche F."/>
            <person name="Braeken M."/>
            <person name="Weltjens I."/>
            <person name="Voet M."/>
            <person name="Bastiaens I."/>
            <person name="Aert R."/>
            <person name="Defoor E."/>
            <person name="Weitzenegger T."/>
            <person name="Bothe G."/>
            <person name="Ramsperger U."/>
            <person name="Hilbert H."/>
            <person name="Braun M."/>
            <person name="Holzer E."/>
            <person name="Brandt A."/>
            <person name="Peters S."/>
            <person name="van Staveren M."/>
            <person name="Dirkse W."/>
            <person name="Mooijman P."/>
            <person name="Klein Lankhorst R."/>
            <person name="Rose M."/>
            <person name="Hauf J."/>
            <person name="Koetter P."/>
            <person name="Berneiser S."/>
            <person name="Hempel S."/>
            <person name="Feldpausch M."/>
            <person name="Lamberth S."/>
            <person name="Van den Daele H."/>
            <person name="De Keyser A."/>
            <person name="Buysshaert C."/>
            <person name="Gielen J."/>
            <person name="Villarroel R."/>
            <person name="De Clercq R."/>
            <person name="van Montagu M."/>
            <person name="Rogers J."/>
            <person name="Cronin A."/>
            <person name="Quail M.A."/>
            <person name="Bray-Allen S."/>
            <person name="Clark L."/>
            <person name="Doggett J."/>
            <person name="Hall S."/>
            <person name="Kay M."/>
            <person name="Lennard N."/>
            <person name="McLay K."/>
            <person name="Mayes R."/>
            <person name="Pettett A."/>
            <person name="Rajandream M.A."/>
            <person name="Lyne M."/>
            <person name="Benes V."/>
            <person name="Rechmann S."/>
            <person name="Borkova D."/>
            <person name="Bloecker H."/>
            <person name="Scharfe M."/>
            <person name="Grimm M."/>
            <person name="Loehnert T.-H."/>
            <person name="Dose S."/>
            <person name="de Haan M."/>
            <person name="Maarse A.C."/>
            <person name="Schaefer M."/>
            <person name="Mueller-Auer S."/>
            <person name="Gabel C."/>
            <person name="Fuchs M."/>
            <person name="Fartmann B."/>
            <person name="Granderath K."/>
            <person name="Dauner D."/>
            <person name="Herzl A."/>
            <person name="Neumann S."/>
            <person name="Argiriou A."/>
            <person name="Vitale D."/>
            <person name="Liguori R."/>
            <person name="Piravandi E."/>
            <person name="Massenet O."/>
            <person name="Quigley F."/>
            <person name="Clabauld G."/>
            <person name="Muendlein A."/>
            <person name="Felber R."/>
            <person name="Schnabl S."/>
            <person name="Hiller R."/>
            <person name="Schmidt W."/>
            <person name="Lecharny A."/>
            <person name="Aubourg S."/>
            <person name="Chefdor F."/>
            <person name="Cooke R."/>
            <person name="Berger C."/>
            <person name="Monfort A."/>
            <person name="Casacuberta E."/>
            <person name="Gibbons T."/>
            <person name="Weber N."/>
            <person name="Vandenbol M."/>
            <person name="Bargues M."/>
            <person name="Terol J."/>
            <person name="Torres A."/>
            <person name="Perez-Perez A."/>
            <person name="Purnelle B."/>
            <person name="Bent E."/>
            <person name="Johnson S."/>
            <person name="Tacon D."/>
            <person name="Jesse T."/>
            <person name="Heijnen L."/>
            <person name="Schwarz S."/>
            <person name="Scholler P."/>
            <person name="Heber S."/>
            <person name="Francs P."/>
            <person name="Bielke C."/>
            <person name="Frishman D."/>
            <person name="Haase D."/>
            <person name="Lemcke K."/>
            <person name="Mewes H.-W."/>
            <person name="Stocker S."/>
            <person name="Zaccaria P."/>
            <person name="Bevan M."/>
            <person name="Wilson R.K."/>
            <person name="de la Bastide M."/>
            <person name="Habermann K."/>
            <person name="Parnell L."/>
            <person name="Dedhia N."/>
            <person name="Gnoj L."/>
            <person name="Schutz K."/>
            <person name="Huang E."/>
            <person name="Spiegel L."/>
            <person name="Sekhon M."/>
            <person name="Murray J."/>
            <person name="Sheet P."/>
            <person name="Cordes M."/>
            <person name="Abu-Threideh J."/>
            <person name="Stoneking T."/>
            <person name="Kalicki J."/>
            <person name="Graves T."/>
            <person name="Harmon G."/>
            <person name="Edwards J."/>
            <person name="Latreille P."/>
            <person name="Courtney L."/>
            <person name="Cloud J."/>
            <person name="Abbott A."/>
            <person name="Scott K."/>
            <person name="Johnson D."/>
            <person name="Minx P."/>
            <person name="Bentley D."/>
            <person name="Fulton B."/>
            <person name="Miller N."/>
            <person name="Greco T."/>
            <person name="Kemp K."/>
            <person name="Kramer J."/>
            <person name="Fulton L."/>
            <person name="Mardis E."/>
            <person name="Dante M."/>
            <person name="Pepin K."/>
            <person name="Hillier L.W."/>
            <person name="Nelson J."/>
            <person name="Spieth J."/>
            <person name="Ryan E."/>
            <person name="Andrews S."/>
            <person name="Geisel C."/>
            <person name="Layman D."/>
            <person name="Du H."/>
            <person name="Ali J."/>
            <person name="Berghoff A."/>
            <person name="Jones K."/>
            <person name="Drone K."/>
            <person name="Cotton M."/>
            <person name="Joshu C."/>
            <person name="Antonoiu B."/>
            <person name="Zidanic M."/>
            <person name="Strong C."/>
            <person name="Sun H."/>
            <person name="Lamar B."/>
            <person name="Yordan C."/>
            <person name="Ma P."/>
            <person name="Zhong J."/>
            <person name="Preston R."/>
            <person name="Vil D."/>
            <person name="Shekher M."/>
            <person name="Matero A."/>
            <person name="Shah R."/>
            <person name="Swaby I.K."/>
            <person name="O'Shaughnessy A."/>
            <person name="Rodriguez M."/>
            <person name="Hoffman J."/>
            <person name="Till S."/>
            <person name="Granat S."/>
            <person name="Shohdy N."/>
            <person name="Hasegawa A."/>
            <person name="Hameed A."/>
            <person name="Lodhi M."/>
            <person name="Johnson A."/>
            <person name="Chen E."/>
            <person name="Marra M.A."/>
            <person name="Martienssen R."/>
            <person name="McCombie W.R."/>
        </authorList>
    </citation>
    <scope>NUCLEOTIDE SEQUENCE [LARGE SCALE GENOMIC DNA]</scope>
    <source>
        <strain>cv. Columbia</strain>
    </source>
</reference>
<reference key="3">
    <citation type="journal article" date="2017" name="Plant J.">
        <title>Araport11: a complete reannotation of the Arabidopsis thaliana reference genome.</title>
        <authorList>
            <person name="Cheng C.Y."/>
            <person name="Krishnakumar V."/>
            <person name="Chan A.P."/>
            <person name="Thibaud-Nissen F."/>
            <person name="Schobel S."/>
            <person name="Town C.D."/>
        </authorList>
    </citation>
    <scope>GENOME REANNOTATION</scope>
    <source>
        <strain>cv. Columbia</strain>
    </source>
</reference>
<reference key="4">
    <citation type="journal article" date="2003" name="Science">
        <title>Empirical analysis of transcriptional activity in the Arabidopsis genome.</title>
        <authorList>
            <person name="Yamada K."/>
            <person name="Lim J."/>
            <person name="Dale J.M."/>
            <person name="Chen H."/>
            <person name="Shinn P."/>
            <person name="Palm C.J."/>
            <person name="Southwick A.M."/>
            <person name="Wu H.C."/>
            <person name="Kim C.J."/>
            <person name="Nguyen M."/>
            <person name="Pham P.K."/>
            <person name="Cheuk R.F."/>
            <person name="Karlin-Newmann G."/>
            <person name="Liu S.X."/>
            <person name="Lam B."/>
            <person name="Sakano H."/>
            <person name="Wu T."/>
            <person name="Yu G."/>
            <person name="Miranda M."/>
            <person name="Quach H.L."/>
            <person name="Tripp M."/>
            <person name="Chang C.H."/>
            <person name="Lee J.M."/>
            <person name="Toriumi M.J."/>
            <person name="Chan M.M."/>
            <person name="Tang C.C."/>
            <person name="Onodera C.S."/>
            <person name="Deng J.M."/>
            <person name="Akiyama K."/>
            <person name="Ansari Y."/>
            <person name="Arakawa T."/>
            <person name="Banh J."/>
            <person name="Banno F."/>
            <person name="Bowser L."/>
            <person name="Brooks S.Y."/>
            <person name="Carninci P."/>
            <person name="Chao Q."/>
            <person name="Choy N."/>
            <person name="Enju A."/>
            <person name="Goldsmith A.D."/>
            <person name="Gurjal M."/>
            <person name="Hansen N.F."/>
            <person name="Hayashizaki Y."/>
            <person name="Johnson-Hopson C."/>
            <person name="Hsuan V.W."/>
            <person name="Iida K."/>
            <person name="Karnes M."/>
            <person name="Khan S."/>
            <person name="Koesema E."/>
            <person name="Ishida J."/>
            <person name="Jiang P.X."/>
            <person name="Jones T."/>
            <person name="Kawai J."/>
            <person name="Kamiya A."/>
            <person name="Meyers C."/>
            <person name="Nakajima M."/>
            <person name="Narusaka M."/>
            <person name="Seki M."/>
            <person name="Sakurai T."/>
            <person name="Satou M."/>
            <person name="Tamse R."/>
            <person name="Vaysberg M."/>
            <person name="Wallender E.K."/>
            <person name="Wong C."/>
            <person name="Yamamura Y."/>
            <person name="Yuan S."/>
            <person name="Shinozaki K."/>
            <person name="Davis R.W."/>
            <person name="Theologis A."/>
            <person name="Ecker J.R."/>
        </authorList>
    </citation>
    <scope>NUCLEOTIDE SEQUENCE [LARGE SCALE MRNA]</scope>
    <source>
        <strain>cv. Columbia</strain>
    </source>
</reference>
<reference key="5">
    <citation type="submission" date="2002-03" db="EMBL/GenBank/DDBJ databases">
        <title>Full-length cDNA from Arabidopsis thaliana.</title>
        <authorList>
            <person name="Brover V.V."/>
            <person name="Troukhan M.E."/>
            <person name="Alexandrov N.A."/>
            <person name="Lu Y.-P."/>
            <person name="Flavell R.B."/>
            <person name="Feldmann K.A."/>
        </authorList>
    </citation>
    <scope>NUCLEOTIDE SEQUENCE [LARGE SCALE MRNA]</scope>
</reference>
<reference key="6">
    <citation type="submission" date="1998-06" db="EMBL/GenBank/DDBJ databases">
        <title>Large-scale screening of phytochrome-regulated genes in etiolated seedlings of Arabidopsis thaliana using fluorescent differential display.</title>
        <authorList>
            <person name="Kuno N."/>
            <person name="Muramatsu T."/>
            <person name="Hamazato F."/>
            <person name="Furuya M."/>
        </authorList>
    </citation>
    <scope>NUCLEOTIDE SEQUENCE [MRNA] OF 96-219</scope>
    <source>
        <strain>cv. Landsberg erecta</strain>
    </source>
</reference>
<reference key="7">
    <citation type="journal article" date="2004" name="J. Biol. Chem.">
        <title>The PSI-O subunit of plant photosystem I is involved in balancing the excitation pressure between the two photosystems.</title>
        <authorList>
            <person name="Jensen P.E."/>
            <person name="Haldrup A."/>
            <person name="Zhang S."/>
            <person name="Scheller H.V."/>
        </authorList>
    </citation>
    <scope>INTERACTION WITH PSAO</scope>
</reference>
<reference key="8">
    <citation type="journal article" date="2008" name="Cell Res.">
        <title>Construction of a chloroplast protein interaction network and functional mining of photosynthetic proteins in Arabidopsis thaliana.</title>
        <authorList>
            <person name="Yu Q.B."/>
            <person name="Li G."/>
            <person name="Wang G."/>
            <person name="Sun J.C."/>
            <person name="Wang P.C."/>
            <person name="Wang C."/>
            <person name="Mi H.L."/>
            <person name="Ma W.M."/>
            <person name="Cui J."/>
            <person name="Cui Y.L."/>
            <person name="Chong K."/>
            <person name="Li Y.X."/>
            <person name="Li Y.H."/>
            <person name="Zhao Z."/>
            <person name="Shi T.L."/>
            <person name="Yang Z.N."/>
        </authorList>
    </citation>
    <scope>INTERACTION WITH CURT1B</scope>
</reference>
<name>PSAL_ARATH</name>
<evidence type="ECO:0000255" key="1"/>
<evidence type="ECO:0000269" key="2">
    <source>
    </source>
</evidence>
<evidence type="ECO:0000269" key="3">
    <source>
    </source>
</evidence>
<evidence type="ECO:0000305" key="4"/>
<evidence type="ECO:0007829" key="5">
    <source>
        <dbReference type="PDB" id="8J6Z"/>
    </source>
</evidence>
<feature type="transit peptide" description="Chloroplast" evidence="4">
    <location>
        <begin position="1"/>
        <end position="50"/>
    </location>
</feature>
<feature type="chain" id="PRO_0000029424" description="Photosystem I reaction center subunit XI, chloroplastic">
    <location>
        <begin position="51"/>
        <end position="219"/>
    </location>
</feature>
<feature type="topological domain" description="Stromal" evidence="1">
    <location>
        <begin position="51"/>
        <end position="134"/>
    </location>
</feature>
<feature type="transmembrane region" description="Helical" evidence="1">
    <location>
        <begin position="135"/>
        <end position="155"/>
    </location>
</feature>
<feature type="topological domain" description="Lumenal" evidence="1">
    <location>
        <begin position="156"/>
        <end position="191"/>
    </location>
</feature>
<feature type="transmembrane region" description="Helical" evidence="1">
    <location>
        <begin position="192"/>
        <end position="212"/>
    </location>
</feature>
<feature type="topological domain" description="Stromal" evidence="1">
    <location>
        <begin position="213"/>
        <end position="219"/>
    </location>
</feature>
<feature type="sequence conflict" description="In Ref. 1; CAB53034." evidence="4" ref="1">
    <original>GI</original>
    <variation>QF</variation>
    <location>
        <begin position="30"/>
        <end position="31"/>
    </location>
</feature>
<feature type="sequence conflict" description="In Ref. 6; BAA84771." evidence="4" ref="6">
    <original>T</original>
    <variation>V</variation>
    <location>
        <position position="96"/>
    </location>
</feature>
<feature type="helix" evidence="5">
    <location>
        <begin position="65"/>
        <end position="67"/>
    </location>
</feature>
<feature type="helix" evidence="5">
    <location>
        <begin position="77"/>
        <end position="80"/>
    </location>
</feature>
<feature type="helix" evidence="5">
    <location>
        <begin position="82"/>
        <end position="89"/>
    </location>
</feature>
<feature type="helix" evidence="5">
    <location>
        <begin position="92"/>
        <end position="94"/>
    </location>
</feature>
<feature type="helix" evidence="5">
    <location>
        <begin position="100"/>
        <end position="122"/>
    </location>
</feature>
<feature type="turn" evidence="5">
    <location>
        <begin position="124"/>
        <end position="127"/>
    </location>
</feature>
<feature type="helix" evidence="5">
    <location>
        <begin position="131"/>
        <end position="157"/>
    </location>
</feature>
<feature type="helix" evidence="5">
    <location>
        <begin position="180"/>
        <end position="182"/>
    </location>
</feature>
<feature type="helix" evidence="5">
    <location>
        <begin position="184"/>
        <end position="210"/>
    </location>
</feature>
<protein>
    <recommendedName>
        <fullName>Photosystem I reaction center subunit XI, chloroplastic</fullName>
        <shortName>PSI-L</shortName>
    </recommendedName>
    <alternativeName>
        <fullName>PSI subunit V</fullName>
    </alternativeName>
</protein>
<accession>Q9SUI4</accession>
<accession>Q9ST32</accession>
<accession>Q9SU06</accession>
<keyword id="KW-0002">3D-structure</keyword>
<keyword id="KW-0150">Chloroplast</keyword>
<keyword id="KW-0472">Membrane</keyword>
<keyword id="KW-0602">Photosynthesis</keyword>
<keyword id="KW-0603">Photosystem I</keyword>
<keyword id="KW-0934">Plastid</keyword>
<keyword id="KW-1185">Reference proteome</keyword>
<keyword id="KW-0809">Transit peptide</keyword>
<keyword id="KW-0812">Transmembrane</keyword>
<keyword id="KW-1133">Transmembrane helix</keyword>
<organism>
    <name type="scientific">Arabidopsis thaliana</name>
    <name type="common">Mouse-ear cress</name>
    <dbReference type="NCBI Taxonomy" id="3702"/>
    <lineage>
        <taxon>Eukaryota</taxon>
        <taxon>Viridiplantae</taxon>
        <taxon>Streptophyta</taxon>
        <taxon>Embryophyta</taxon>
        <taxon>Tracheophyta</taxon>
        <taxon>Spermatophyta</taxon>
        <taxon>Magnoliopsida</taxon>
        <taxon>eudicotyledons</taxon>
        <taxon>Gunneridae</taxon>
        <taxon>Pentapetalae</taxon>
        <taxon>rosids</taxon>
        <taxon>malvids</taxon>
        <taxon>Brassicales</taxon>
        <taxon>Brassicaceae</taxon>
        <taxon>Camelineae</taxon>
        <taxon>Arabidopsis</taxon>
    </lineage>
</organism>
<gene>
    <name type="primary">PSAL</name>
    <name type="ordered locus">At4g12800</name>
    <name type="ORF">T20K18.150</name>
</gene>
<proteinExistence type="evidence at protein level"/>
<comment type="subunit">
    <text evidence="2 3">Interacts with CURT1B and PSAO.</text>
</comment>
<comment type="subcellular location">
    <subcellularLocation>
        <location evidence="1">Plastid</location>
        <location evidence="1">Chloroplast membrane</location>
        <topology evidence="1">Multi-pass membrane protein</topology>
    </subcellularLocation>
</comment>
<comment type="similarity">
    <text evidence="4">Belongs to the PsaL family.</text>
</comment>